<keyword id="KW-0030">Aminoacyl-tRNA synthetase</keyword>
<keyword id="KW-0067">ATP-binding</keyword>
<keyword id="KW-0963">Cytoplasm</keyword>
<keyword id="KW-0436">Ligase</keyword>
<keyword id="KW-0547">Nucleotide-binding</keyword>
<keyword id="KW-0648">Protein biosynthesis</keyword>
<keyword id="KW-1185">Reference proteome</keyword>
<dbReference type="EC" id="6.1.1.19" evidence="1"/>
<dbReference type="EMBL" id="CP000494">
    <property type="protein sequence ID" value="ABQ36461.1"/>
    <property type="molecule type" value="Genomic_DNA"/>
</dbReference>
<dbReference type="RefSeq" id="WP_012044457.1">
    <property type="nucleotide sequence ID" value="NC_009485.1"/>
</dbReference>
<dbReference type="SMR" id="A5EJW7"/>
<dbReference type="STRING" id="288000.BBta_4423"/>
<dbReference type="KEGG" id="bbt:BBta_4423"/>
<dbReference type="eggNOG" id="COG0018">
    <property type="taxonomic scope" value="Bacteria"/>
</dbReference>
<dbReference type="HOGENOM" id="CLU_006406_0_1_5"/>
<dbReference type="OrthoDB" id="9803211at2"/>
<dbReference type="Proteomes" id="UP000000246">
    <property type="component" value="Chromosome"/>
</dbReference>
<dbReference type="GO" id="GO:0005737">
    <property type="term" value="C:cytoplasm"/>
    <property type="evidence" value="ECO:0007669"/>
    <property type="project" value="UniProtKB-SubCell"/>
</dbReference>
<dbReference type="GO" id="GO:0004814">
    <property type="term" value="F:arginine-tRNA ligase activity"/>
    <property type="evidence" value="ECO:0007669"/>
    <property type="project" value="UniProtKB-UniRule"/>
</dbReference>
<dbReference type="GO" id="GO:0005524">
    <property type="term" value="F:ATP binding"/>
    <property type="evidence" value="ECO:0007669"/>
    <property type="project" value="UniProtKB-UniRule"/>
</dbReference>
<dbReference type="GO" id="GO:0006420">
    <property type="term" value="P:arginyl-tRNA aminoacylation"/>
    <property type="evidence" value="ECO:0007669"/>
    <property type="project" value="UniProtKB-UniRule"/>
</dbReference>
<dbReference type="CDD" id="cd00671">
    <property type="entry name" value="ArgRS_core"/>
    <property type="match status" value="1"/>
</dbReference>
<dbReference type="FunFam" id="1.10.730.10:FF:000008">
    <property type="entry name" value="Arginine--tRNA ligase"/>
    <property type="match status" value="1"/>
</dbReference>
<dbReference type="FunFam" id="3.40.50.620:FF:000062">
    <property type="entry name" value="Arginine--tRNA ligase"/>
    <property type="match status" value="1"/>
</dbReference>
<dbReference type="Gene3D" id="3.30.1360.70">
    <property type="entry name" value="Arginyl tRNA synthetase N-terminal domain"/>
    <property type="match status" value="1"/>
</dbReference>
<dbReference type="Gene3D" id="3.40.50.620">
    <property type="entry name" value="HUPs"/>
    <property type="match status" value="1"/>
</dbReference>
<dbReference type="Gene3D" id="1.10.730.10">
    <property type="entry name" value="Isoleucyl-tRNA Synthetase, Domain 1"/>
    <property type="match status" value="1"/>
</dbReference>
<dbReference type="HAMAP" id="MF_00123">
    <property type="entry name" value="Arg_tRNA_synth"/>
    <property type="match status" value="1"/>
</dbReference>
<dbReference type="InterPro" id="IPR001412">
    <property type="entry name" value="aa-tRNA-synth_I_CS"/>
</dbReference>
<dbReference type="InterPro" id="IPR001278">
    <property type="entry name" value="Arg-tRNA-ligase"/>
</dbReference>
<dbReference type="InterPro" id="IPR005148">
    <property type="entry name" value="Arg-tRNA-synth_N"/>
</dbReference>
<dbReference type="InterPro" id="IPR036695">
    <property type="entry name" value="Arg-tRNA-synth_N_sf"/>
</dbReference>
<dbReference type="InterPro" id="IPR035684">
    <property type="entry name" value="ArgRS_core"/>
</dbReference>
<dbReference type="InterPro" id="IPR008909">
    <property type="entry name" value="DALR_anticod-bd"/>
</dbReference>
<dbReference type="InterPro" id="IPR014729">
    <property type="entry name" value="Rossmann-like_a/b/a_fold"/>
</dbReference>
<dbReference type="InterPro" id="IPR009080">
    <property type="entry name" value="tRNAsynth_Ia_anticodon-bd"/>
</dbReference>
<dbReference type="NCBIfam" id="TIGR00456">
    <property type="entry name" value="argS"/>
    <property type="match status" value="1"/>
</dbReference>
<dbReference type="PANTHER" id="PTHR11956:SF5">
    <property type="entry name" value="ARGININE--TRNA LIGASE, CYTOPLASMIC"/>
    <property type="match status" value="1"/>
</dbReference>
<dbReference type="PANTHER" id="PTHR11956">
    <property type="entry name" value="ARGINYL-TRNA SYNTHETASE"/>
    <property type="match status" value="1"/>
</dbReference>
<dbReference type="Pfam" id="PF03485">
    <property type="entry name" value="Arg_tRNA_synt_N"/>
    <property type="match status" value="1"/>
</dbReference>
<dbReference type="Pfam" id="PF05746">
    <property type="entry name" value="DALR_1"/>
    <property type="match status" value="1"/>
</dbReference>
<dbReference type="Pfam" id="PF00750">
    <property type="entry name" value="tRNA-synt_1d"/>
    <property type="match status" value="2"/>
</dbReference>
<dbReference type="PRINTS" id="PR01038">
    <property type="entry name" value="TRNASYNTHARG"/>
</dbReference>
<dbReference type="SMART" id="SM01016">
    <property type="entry name" value="Arg_tRNA_synt_N"/>
    <property type="match status" value="1"/>
</dbReference>
<dbReference type="SMART" id="SM00836">
    <property type="entry name" value="DALR_1"/>
    <property type="match status" value="1"/>
</dbReference>
<dbReference type="SUPFAM" id="SSF47323">
    <property type="entry name" value="Anticodon-binding domain of a subclass of class I aminoacyl-tRNA synthetases"/>
    <property type="match status" value="1"/>
</dbReference>
<dbReference type="SUPFAM" id="SSF55190">
    <property type="entry name" value="Arginyl-tRNA synthetase (ArgRS), N-terminal 'additional' domain"/>
    <property type="match status" value="1"/>
</dbReference>
<dbReference type="SUPFAM" id="SSF52374">
    <property type="entry name" value="Nucleotidylyl transferase"/>
    <property type="match status" value="1"/>
</dbReference>
<dbReference type="PROSITE" id="PS00178">
    <property type="entry name" value="AA_TRNA_LIGASE_I"/>
    <property type="match status" value="1"/>
</dbReference>
<name>SYR_BRASB</name>
<accession>A5EJW7</accession>
<gene>
    <name evidence="1" type="primary">argS</name>
    <name type="ordered locus">BBta_4423</name>
</gene>
<proteinExistence type="inferred from homology"/>
<sequence>MLEQASNLHLFADVLARVHAICAALAKDGNWPEGIDVSRVVVEPPRDPSHGDMATNAAMVLAKEAKAKPRDLAEAIAERLRADELVAKVDVAGPGFINLTLHPVVWARQLGTILRDGDAYGRIAPVVGAPKVNVEYVSANPTGPMHVGHCRGAVFGDALCSLLQFAGRDVTREYYINDAGAQVDVLARSAFLRYREALGEEIGAIPEGLYPGDYLKPVGQALAAEHGDRLKAMPEAQWLPIVRDKAIAMMMAEIKDDLAALNIRHDVFFSERSLIAGSTNKVAETIEFLRERGDVYEGRLPPPKGAPVEDWEDREQLLFRATAYGDDVDRPLIKSDGSYTYFASDIANHRHKFERGFADLIDVFGADHGGYIKRMQAAVKAVTAAQAVLDVKVVQLVKLLRNGEPVKMSKRSGDFVTLREVVDEVGRDAVRFMMLYRKNDAVLDFDLAKVIEQSRDNPVFYVQYGHARGHSIFRNARDSFPSLPVEEGARLAFLRQAKLEKLADPSEIDLLKRLALYPRTVESAALAHEPHRVAFYLYDLASEFHALWTRGRDLPYLRFIIDDDAELTMARLAMVQGVVSVLASGLAILGVNAPDAMR</sequence>
<organism>
    <name type="scientific">Bradyrhizobium sp. (strain BTAi1 / ATCC BAA-1182)</name>
    <dbReference type="NCBI Taxonomy" id="288000"/>
    <lineage>
        <taxon>Bacteria</taxon>
        <taxon>Pseudomonadati</taxon>
        <taxon>Pseudomonadota</taxon>
        <taxon>Alphaproteobacteria</taxon>
        <taxon>Hyphomicrobiales</taxon>
        <taxon>Nitrobacteraceae</taxon>
        <taxon>Bradyrhizobium</taxon>
    </lineage>
</organism>
<comment type="catalytic activity">
    <reaction evidence="1">
        <text>tRNA(Arg) + L-arginine + ATP = L-arginyl-tRNA(Arg) + AMP + diphosphate</text>
        <dbReference type="Rhea" id="RHEA:20301"/>
        <dbReference type="Rhea" id="RHEA-COMP:9658"/>
        <dbReference type="Rhea" id="RHEA-COMP:9673"/>
        <dbReference type="ChEBI" id="CHEBI:30616"/>
        <dbReference type="ChEBI" id="CHEBI:32682"/>
        <dbReference type="ChEBI" id="CHEBI:33019"/>
        <dbReference type="ChEBI" id="CHEBI:78442"/>
        <dbReference type="ChEBI" id="CHEBI:78513"/>
        <dbReference type="ChEBI" id="CHEBI:456215"/>
        <dbReference type="EC" id="6.1.1.19"/>
    </reaction>
</comment>
<comment type="subunit">
    <text evidence="1">Monomer.</text>
</comment>
<comment type="subcellular location">
    <subcellularLocation>
        <location evidence="1">Cytoplasm</location>
    </subcellularLocation>
</comment>
<comment type="similarity">
    <text evidence="1">Belongs to the class-I aminoacyl-tRNA synthetase family.</text>
</comment>
<protein>
    <recommendedName>
        <fullName evidence="1">Arginine--tRNA ligase</fullName>
        <ecNumber evidence="1">6.1.1.19</ecNumber>
    </recommendedName>
    <alternativeName>
        <fullName evidence="1">Arginyl-tRNA synthetase</fullName>
        <shortName evidence="1">ArgRS</shortName>
    </alternativeName>
</protein>
<reference key="1">
    <citation type="journal article" date="2007" name="Science">
        <title>Legumes symbioses: absence of nod genes in photosynthetic bradyrhizobia.</title>
        <authorList>
            <person name="Giraud E."/>
            <person name="Moulin L."/>
            <person name="Vallenet D."/>
            <person name="Barbe V."/>
            <person name="Cytryn E."/>
            <person name="Avarre J.-C."/>
            <person name="Jaubert M."/>
            <person name="Simon D."/>
            <person name="Cartieaux F."/>
            <person name="Prin Y."/>
            <person name="Bena G."/>
            <person name="Hannibal L."/>
            <person name="Fardoux J."/>
            <person name="Kojadinovic M."/>
            <person name="Vuillet L."/>
            <person name="Lajus A."/>
            <person name="Cruveiller S."/>
            <person name="Rouy Z."/>
            <person name="Mangenot S."/>
            <person name="Segurens B."/>
            <person name="Dossat C."/>
            <person name="Franck W.L."/>
            <person name="Chang W.-S."/>
            <person name="Saunders E."/>
            <person name="Bruce D."/>
            <person name="Richardson P."/>
            <person name="Normand P."/>
            <person name="Dreyfus B."/>
            <person name="Pignol D."/>
            <person name="Stacey G."/>
            <person name="Emerich D."/>
            <person name="Vermeglio A."/>
            <person name="Medigue C."/>
            <person name="Sadowsky M."/>
        </authorList>
    </citation>
    <scope>NUCLEOTIDE SEQUENCE [LARGE SCALE GENOMIC DNA]</scope>
    <source>
        <strain>BTAi1 / ATCC BAA-1182</strain>
    </source>
</reference>
<feature type="chain" id="PRO_1000017993" description="Arginine--tRNA ligase">
    <location>
        <begin position="1"/>
        <end position="598"/>
    </location>
</feature>
<feature type="short sequence motif" description="'HIGH' region">
    <location>
        <begin position="139"/>
        <end position="149"/>
    </location>
</feature>
<evidence type="ECO:0000255" key="1">
    <source>
        <dbReference type="HAMAP-Rule" id="MF_00123"/>
    </source>
</evidence>